<evidence type="ECO:0000250" key="1"/>
<evidence type="ECO:0000250" key="2">
    <source>
        <dbReference type="UniProtKB" id="P00900"/>
    </source>
</evidence>
<evidence type="ECO:0000255" key="3">
    <source>
        <dbReference type="PROSITE-ProRule" id="PRU00605"/>
    </source>
</evidence>
<accession>P42388</accession>
<proteinExistence type="inferred from homology"/>
<protein>
    <recommendedName>
        <fullName>Anthranilate synthase component 2</fullName>
        <shortName>AS</shortName>
        <shortName>ASII</shortName>
        <ecNumber>4.1.3.27</ecNumber>
    </recommendedName>
    <alternativeName>
        <fullName>Anthranilate synthase, GATase component</fullName>
    </alternativeName>
    <alternativeName>
        <fullName>Anthranilate synthase, glutamine amidotransferase component</fullName>
    </alternativeName>
</protein>
<sequence length="196" mass="21867">MANILLLDNFDSFTYNLVEQLRNKNSNVLIYRNTVDINTILNSIKKIRNPILMLSPGPSTPKNAGCMLNLIKKVKGEIPIVGICLGHQAIVEAYGGIIGYAGEIFHGKASLINHDGLEMFEGLPQPLPVARYHSLICNKIPKNFIINSYFNDMIMSVRNNLDYVCGFQFHPESILTTSGALLLEKIINWASLKYKG</sequence>
<dbReference type="EC" id="4.1.3.27"/>
<dbReference type="EMBL" id="Z21938">
    <property type="protein sequence ID" value="CAA79932.1"/>
    <property type="molecule type" value="Genomic_DNA"/>
</dbReference>
<dbReference type="PIR" id="I40053">
    <property type="entry name" value="I40053"/>
</dbReference>
<dbReference type="SMR" id="P42388"/>
<dbReference type="MEROPS" id="C26.960"/>
<dbReference type="UniPathway" id="UPA00035">
    <property type="reaction ID" value="UER00040"/>
</dbReference>
<dbReference type="Proteomes" id="UP000000416">
    <property type="component" value="Plasmid pBsc"/>
</dbReference>
<dbReference type="GO" id="GO:0005829">
    <property type="term" value="C:cytosol"/>
    <property type="evidence" value="ECO:0007669"/>
    <property type="project" value="TreeGrafter"/>
</dbReference>
<dbReference type="GO" id="GO:0004048">
    <property type="term" value="F:anthranilate phosphoribosyltransferase activity"/>
    <property type="evidence" value="ECO:0007669"/>
    <property type="project" value="TreeGrafter"/>
</dbReference>
<dbReference type="GO" id="GO:0004049">
    <property type="term" value="F:anthranilate synthase activity"/>
    <property type="evidence" value="ECO:0007669"/>
    <property type="project" value="UniProtKB-EC"/>
</dbReference>
<dbReference type="GO" id="GO:0000162">
    <property type="term" value="P:L-tryptophan biosynthetic process"/>
    <property type="evidence" value="ECO:0007669"/>
    <property type="project" value="UniProtKB-UniPathway"/>
</dbReference>
<dbReference type="GO" id="GO:0002047">
    <property type="term" value="P:phenazine biosynthetic process"/>
    <property type="evidence" value="ECO:0007669"/>
    <property type="project" value="TreeGrafter"/>
</dbReference>
<dbReference type="CDD" id="cd01743">
    <property type="entry name" value="GATase1_Anthranilate_Synthase"/>
    <property type="match status" value="1"/>
</dbReference>
<dbReference type="FunFam" id="3.40.50.880:FF:000003">
    <property type="entry name" value="Anthranilate synthase component II"/>
    <property type="match status" value="1"/>
</dbReference>
<dbReference type="Gene3D" id="3.40.50.880">
    <property type="match status" value="1"/>
</dbReference>
<dbReference type="InterPro" id="IPR050472">
    <property type="entry name" value="Anth_synth/Amidotransfase"/>
</dbReference>
<dbReference type="InterPro" id="IPR029062">
    <property type="entry name" value="Class_I_gatase-like"/>
</dbReference>
<dbReference type="InterPro" id="IPR017926">
    <property type="entry name" value="GATASE"/>
</dbReference>
<dbReference type="InterPro" id="IPR006221">
    <property type="entry name" value="TrpG/PapA_dom"/>
</dbReference>
<dbReference type="NCBIfam" id="TIGR00566">
    <property type="entry name" value="trpG_papA"/>
    <property type="match status" value="1"/>
</dbReference>
<dbReference type="PANTHER" id="PTHR43418:SF2">
    <property type="entry name" value="BIFUNCTIONAL PROTEIN TRPGD"/>
    <property type="match status" value="1"/>
</dbReference>
<dbReference type="PANTHER" id="PTHR43418">
    <property type="entry name" value="MULTIFUNCTIONAL TRYPTOPHAN BIOSYNTHESIS PROTEIN-RELATED"/>
    <property type="match status" value="1"/>
</dbReference>
<dbReference type="Pfam" id="PF00117">
    <property type="entry name" value="GATase"/>
    <property type="match status" value="1"/>
</dbReference>
<dbReference type="PRINTS" id="PR00097">
    <property type="entry name" value="ANTSNTHASEII"/>
</dbReference>
<dbReference type="PRINTS" id="PR00096">
    <property type="entry name" value="GATASE"/>
</dbReference>
<dbReference type="SUPFAM" id="SSF52317">
    <property type="entry name" value="Class I glutamine amidotransferase-like"/>
    <property type="match status" value="1"/>
</dbReference>
<dbReference type="PROSITE" id="PS51273">
    <property type="entry name" value="GATASE_TYPE_1"/>
    <property type="match status" value="1"/>
</dbReference>
<organism>
    <name type="scientific">Buchnera aphidicola subsp. Schizaphis graminum (strain Sg)</name>
    <dbReference type="NCBI Taxonomy" id="198804"/>
    <lineage>
        <taxon>Bacteria</taxon>
        <taxon>Pseudomonadati</taxon>
        <taxon>Pseudomonadota</taxon>
        <taxon>Gammaproteobacteria</taxon>
        <taxon>Enterobacterales</taxon>
        <taxon>Erwiniaceae</taxon>
        <taxon>Buchnera</taxon>
    </lineage>
</organism>
<name>TRPG_BUCAP</name>
<geneLocation type="plasmid">
    <name>pBSc</name>
</geneLocation>
<reference key="1">
    <citation type="journal article" date="1994" name="Proc. Natl. Acad. Sci. U.S.A.">
        <title>Amplification of trpEG: adaptation of Buchnera aphidicola to an endosymbiotic association with aphids.</title>
        <authorList>
            <person name="Lai C.-Y."/>
            <person name="Baumann L."/>
            <person name="Baumann P."/>
        </authorList>
    </citation>
    <scope>NUCLEOTIDE SEQUENCE [LARGE SCALE GENOMIC DNA]</scope>
    <source>
        <strain>Sg</strain>
    </source>
</reference>
<feature type="chain" id="PRO_0000056873" description="Anthranilate synthase component 2">
    <location>
        <begin position="1"/>
        <end position="196"/>
    </location>
</feature>
<feature type="domain" description="Glutamine amidotransferase type-1" evidence="3">
    <location>
        <begin position="3"/>
        <end position="196"/>
    </location>
</feature>
<feature type="active site" description="Nucleophile; for GATase activity" evidence="3">
    <location>
        <position position="84"/>
    </location>
</feature>
<feature type="active site" description="For GATase activity" evidence="3">
    <location>
        <position position="170"/>
    </location>
</feature>
<feature type="active site" description="For GATase activity" evidence="3">
    <location>
        <position position="172"/>
    </location>
</feature>
<feature type="binding site" evidence="2">
    <location>
        <begin position="57"/>
        <end position="59"/>
    </location>
    <ligand>
        <name>L-glutamine</name>
        <dbReference type="ChEBI" id="CHEBI:58359"/>
    </ligand>
</feature>
<feature type="binding site" evidence="2">
    <location>
        <position position="88"/>
    </location>
    <ligand>
        <name>L-glutamine</name>
        <dbReference type="ChEBI" id="CHEBI:58359"/>
    </ligand>
</feature>
<feature type="binding site" evidence="2">
    <location>
        <begin position="134"/>
        <end position="135"/>
    </location>
    <ligand>
        <name>L-glutamine</name>
        <dbReference type="ChEBI" id="CHEBI:58359"/>
    </ligand>
</feature>
<gene>
    <name type="primary">trpG</name>
    <name type="ordered locus">BUsg_PT2</name>
</gene>
<keyword id="KW-0028">Amino-acid biosynthesis</keyword>
<keyword id="KW-0057">Aromatic amino acid biosynthesis</keyword>
<keyword id="KW-0315">Glutamine amidotransferase</keyword>
<keyword id="KW-0456">Lyase</keyword>
<keyword id="KW-0614">Plasmid</keyword>
<keyword id="KW-0822">Tryptophan biosynthesis</keyword>
<comment type="function">
    <text evidence="1">Part of a heterotetrameric complex that catalyzes the two-step biosynthesis of anthranilate, an intermediate in the biosynthesis of L-tryptophan. In the first step, the glutamine-binding beta subunit (TrpG) of anthranilate synthase (AS) provides the glutamine amidotransferase activity which generates ammonia as a substrate that, along with chorismate, is used in the second step, catalyzed by the large alpha subunit of AS (TrpE) to produce anthranilate. In the absence of TrpG, TrpE can synthesize anthranilate directly from chorismate and high concentrations of ammonia (By similarity).</text>
</comment>
<comment type="catalytic activity">
    <reaction>
        <text>chorismate + L-glutamine = anthranilate + pyruvate + L-glutamate + H(+)</text>
        <dbReference type="Rhea" id="RHEA:21732"/>
        <dbReference type="ChEBI" id="CHEBI:15361"/>
        <dbReference type="ChEBI" id="CHEBI:15378"/>
        <dbReference type="ChEBI" id="CHEBI:16567"/>
        <dbReference type="ChEBI" id="CHEBI:29748"/>
        <dbReference type="ChEBI" id="CHEBI:29985"/>
        <dbReference type="ChEBI" id="CHEBI:58359"/>
        <dbReference type="EC" id="4.1.3.27"/>
    </reaction>
</comment>
<comment type="pathway">
    <text>Amino-acid biosynthesis; L-tryptophan biosynthesis; L-tryptophan from chorismate: step 1/5.</text>
</comment>
<comment type="subunit">
    <text evidence="1">Heterotetramer consisting of two non-identical subunits: a beta subunit (TrpG) and a large alpha subunit (TrpE).</text>
</comment>